<organism>
    <name type="scientific">Equine herpesvirus 2 (strain 86/87)</name>
    <name type="common">EHV-2</name>
    <dbReference type="NCBI Taxonomy" id="82831"/>
    <lineage>
        <taxon>Viruses</taxon>
        <taxon>Duplodnaviria</taxon>
        <taxon>Heunggongvirae</taxon>
        <taxon>Peploviricota</taxon>
        <taxon>Herviviricetes</taxon>
        <taxon>Herpesvirales</taxon>
        <taxon>Orthoherpesviridae</taxon>
        <taxon>Gammaherpesvirinae</taxon>
        <taxon>Percavirus</taxon>
        <taxon>Percavirus equidgamma2</taxon>
        <taxon>Equid gammaherpesvirus 2</taxon>
    </lineage>
</organism>
<protein>
    <recommendedName>
        <fullName>DNA polymerase catalytic subunit</fullName>
        <ecNumber>2.7.7.7</ecNumber>
    </recommendedName>
</protein>
<proteinExistence type="inferred from homology"/>
<accession>P52367</accession>
<organismHost>
    <name type="scientific">Equus caballus</name>
    <name type="common">Horse</name>
    <dbReference type="NCBI Taxonomy" id="9796"/>
</organismHost>
<feature type="chain" id="PRO_0000046520" description="DNA polymerase catalytic subunit">
    <location>
        <begin position="1"/>
        <end position="1008"/>
    </location>
</feature>
<comment type="catalytic activity">
    <reaction>
        <text>DNA(n) + a 2'-deoxyribonucleoside 5'-triphosphate = DNA(n+1) + diphosphate</text>
        <dbReference type="Rhea" id="RHEA:22508"/>
        <dbReference type="Rhea" id="RHEA-COMP:17339"/>
        <dbReference type="Rhea" id="RHEA-COMP:17340"/>
        <dbReference type="ChEBI" id="CHEBI:33019"/>
        <dbReference type="ChEBI" id="CHEBI:61560"/>
        <dbReference type="ChEBI" id="CHEBI:173112"/>
        <dbReference type="EC" id="2.7.7.7"/>
    </reaction>
</comment>
<comment type="subcellular location">
    <subcellularLocation>
        <location>Host nucleus</location>
    </subcellularLocation>
</comment>
<comment type="similarity">
    <text evidence="1">Belongs to the DNA polymerase type-B family.</text>
</comment>
<dbReference type="EC" id="2.7.7.7"/>
<dbReference type="EMBL" id="U20824">
    <property type="protein sequence ID" value="AAC13796.1"/>
    <property type="molecule type" value="Genomic_DNA"/>
</dbReference>
<dbReference type="PIR" id="S55603">
    <property type="entry name" value="S55603"/>
</dbReference>
<dbReference type="SMR" id="P52367"/>
<dbReference type="KEGG" id="vg:1461085"/>
<dbReference type="Proteomes" id="UP000007083">
    <property type="component" value="Segment"/>
</dbReference>
<dbReference type="GO" id="GO:0042025">
    <property type="term" value="C:host cell nucleus"/>
    <property type="evidence" value="ECO:0007669"/>
    <property type="project" value="UniProtKB-SubCell"/>
</dbReference>
<dbReference type="GO" id="GO:0003677">
    <property type="term" value="F:DNA binding"/>
    <property type="evidence" value="ECO:0007669"/>
    <property type="project" value="UniProtKB-KW"/>
</dbReference>
<dbReference type="GO" id="GO:0003887">
    <property type="term" value="F:DNA-directed DNA polymerase activity"/>
    <property type="evidence" value="ECO:0007669"/>
    <property type="project" value="UniProtKB-KW"/>
</dbReference>
<dbReference type="GO" id="GO:0000166">
    <property type="term" value="F:nucleotide binding"/>
    <property type="evidence" value="ECO:0007669"/>
    <property type="project" value="InterPro"/>
</dbReference>
<dbReference type="GO" id="GO:0006261">
    <property type="term" value="P:DNA-templated DNA replication"/>
    <property type="evidence" value="ECO:0007669"/>
    <property type="project" value="TreeGrafter"/>
</dbReference>
<dbReference type="GO" id="GO:0039693">
    <property type="term" value="P:viral DNA genome replication"/>
    <property type="evidence" value="ECO:0007669"/>
    <property type="project" value="UniProtKB-KW"/>
</dbReference>
<dbReference type="FunFam" id="3.30.420.10:FF:000004">
    <property type="entry name" value="DNA polymerase"/>
    <property type="match status" value="1"/>
</dbReference>
<dbReference type="Gene3D" id="1.10.132.60">
    <property type="entry name" value="DNA polymerase family B, C-terminal domain"/>
    <property type="match status" value="1"/>
</dbReference>
<dbReference type="Gene3D" id="3.30.342.10">
    <property type="entry name" value="DNA Polymerase, chain B, domain 1"/>
    <property type="match status" value="1"/>
</dbReference>
<dbReference type="Gene3D" id="1.10.287.690">
    <property type="entry name" value="Helix hairpin bin"/>
    <property type="match status" value="1"/>
</dbReference>
<dbReference type="Gene3D" id="3.90.1600.10">
    <property type="entry name" value="Palm domain of DNA polymerase"/>
    <property type="match status" value="1"/>
</dbReference>
<dbReference type="Gene3D" id="3.30.420.10">
    <property type="entry name" value="Ribonuclease H-like superfamily/Ribonuclease H"/>
    <property type="match status" value="1"/>
</dbReference>
<dbReference type="InterPro" id="IPR006172">
    <property type="entry name" value="DNA-dir_DNA_pol_B"/>
</dbReference>
<dbReference type="InterPro" id="IPR017964">
    <property type="entry name" value="DNA-dir_DNA_pol_B_CS"/>
</dbReference>
<dbReference type="InterPro" id="IPR006133">
    <property type="entry name" value="DNA-dir_DNA_pol_B_exonuc"/>
</dbReference>
<dbReference type="InterPro" id="IPR006134">
    <property type="entry name" value="DNA-dir_DNA_pol_B_multi_dom"/>
</dbReference>
<dbReference type="InterPro" id="IPR043502">
    <property type="entry name" value="DNA/RNA_pol_sf"/>
</dbReference>
<dbReference type="InterPro" id="IPR042087">
    <property type="entry name" value="DNA_pol_B_thumb"/>
</dbReference>
<dbReference type="InterPro" id="IPR023211">
    <property type="entry name" value="DNA_pol_palm_dom_sf"/>
</dbReference>
<dbReference type="InterPro" id="IPR050240">
    <property type="entry name" value="DNA_pol_type-B"/>
</dbReference>
<dbReference type="InterPro" id="IPR012337">
    <property type="entry name" value="RNaseH-like_sf"/>
</dbReference>
<dbReference type="InterPro" id="IPR036397">
    <property type="entry name" value="RNaseH_sf"/>
</dbReference>
<dbReference type="PANTHER" id="PTHR10322">
    <property type="entry name" value="DNA POLYMERASE CATALYTIC SUBUNIT"/>
    <property type="match status" value="1"/>
</dbReference>
<dbReference type="PANTHER" id="PTHR10322:SF23">
    <property type="entry name" value="DNA POLYMERASE DELTA CATALYTIC SUBUNIT"/>
    <property type="match status" value="1"/>
</dbReference>
<dbReference type="Pfam" id="PF00136">
    <property type="entry name" value="DNA_pol_B"/>
    <property type="match status" value="1"/>
</dbReference>
<dbReference type="Pfam" id="PF03104">
    <property type="entry name" value="DNA_pol_B_exo1"/>
    <property type="match status" value="1"/>
</dbReference>
<dbReference type="PRINTS" id="PR00106">
    <property type="entry name" value="DNAPOLB"/>
</dbReference>
<dbReference type="SMART" id="SM00486">
    <property type="entry name" value="POLBc"/>
    <property type="match status" value="1"/>
</dbReference>
<dbReference type="SUPFAM" id="SSF56672">
    <property type="entry name" value="DNA/RNA polymerases"/>
    <property type="match status" value="1"/>
</dbReference>
<dbReference type="SUPFAM" id="SSF53098">
    <property type="entry name" value="Ribonuclease H-like"/>
    <property type="match status" value="1"/>
</dbReference>
<dbReference type="PROSITE" id="PS00116">
    <property type="entry name" value="DNA_POLYMERASE_B"/>
    <property type="match status" value="1"/>
</dbReference>
<reference key="1">
    <citation type="journal article" date="1995" name="J. Mol. Biol.">
        <title>The DNA sequence of equine herpesvirus 2.</title>
        <authorList>
            <person name="Telford E.A.R."/>
            <person name="Watson M.S."/>
            <person name="Aird H.C."/>
            <person name="Perry J."/>
            <person name="Davison A.J."/>
        </authorList>
    </citation>
    <scope>NUCLEOTIDE SEQUENCE [LARGE SCALE GENOMIC DNA]</scope>
</reference>
<name>DPOL_EHV2</name>
<sequence length="1008" mass="112664">MSFYNPYLVKRTFLKKAAPSRPTKEYTRIIPKCFKTPGAAGVVPHTSTLDPVCFVGDKETPILYGDGSRSLWSAGGRGGPGTGAGQGHTPVALTFHVYDIIETVYGQDRCDHVPFQFQTDIIPSGTVLKLLGRTSDDRSVCVNVFRQELYFYVRVPEGLKLDFLIQQCSRENFNFSQGRYRYEKTSKRVLREYCVEAREVYRVFASSQGFVDLLAGGLTAAGCEVFETNVDAARRFIIDNGFSTFGWYSCAAAVPRQGGAARDSWTELEYDCAAGDLEFHAGRADWPGYNVLSFDIECLGENGFPNASRDEDMILQISCVIWKAGSGEAPRSVLLNLGTCEEIEGVEVYQCPSELDLLYLFFTMIRDADVEFVTGYNISNFDFPYVIDRATQVYNLNLKEFTRVRSSSIFEVHKPKNSSAGFMRAVSKVKVAGVVPIDMYQVCRDKLSLSNYKLDTVAGECVGAKKEDVSYKEIPHLFRQGPGGRARLGLYCVKDSALVLDLLRYFMTHVEISEIAKIAKIPTRRVLTDGQQIRVFSCLLDVAGREGYILPVDRHADAEGYQGATVIDPSPGFYNTPVLVVDFASLYPTIIQAHNLCYSTMIPGDRLCLHPHLGPGDYETFELASGPVHFVKKHKAVSLLATLLNVWLAKRKAIRRELATVSDEAVRTILDKQQLAIKVTCNAVYGFTGVASGILPCLKIAETVTFQGRRMLENSKRYIEGVTPEGLADILGRRVECAPDASFKVIYGDTDSLFIHCRGYRPEQVTGFCDELAAHMTRTLFVDPIKLEAEKTFKCLILLTKKRYIGMMTTDRLLMKGVDLVRKTACRFVQETTKAILDLVMGDEAVRAAAERLCAMRVEEVCARGPPVGFLKVVDILNDSYRKLRLNRVPVGQLSFSTELSRPISYYKTLTLPHLVVYHKIMQRNEELPQIHDRIAYVFVQSPKGKLRSEMAEDPAYAAQHNIPPAVDLYFDKVIHGAANILQCLFENDSDKAARVLYNFADLPPDDL</sequence>
<evidence type="ECO:0000305" key="1"/>
<keyword id="KW-0235">DNA replication</keyword>
<keyword id="KW-0238">DNA-binding</keyword>
<keyword id="KW-0239">DNA-directed DNA polymerase</keyword>
<keyword id="KW-1048">Host nucleus</keyword>
<keyword id="KW-0548">Nucleotidyltransferase</keyword>
<keyword id="KW-1185">Reference proteome</keyword>
<keyword id="KW-0808">Transferase</keyword>
<keyword id="KW-1194">Viral DNA replication</keyword>
<gene>
    <name type="primary">9</name>
</gene>